<name>TYSY_ROSDO</name>
<dbReference type="EC" id="2.1.1.45" evidence="1"/>
<dbReference type="EMBL" id="CP000362">
    <property type="protein sequence ID" value="ABG31485.1"/>
    <property type="molecule type" value="Genomic_DNA"/>
</dbReference>
<dbReference type="RefSeq" id="WP_011568102.1">
    <property type="nucleotide sequence ID" value="NC_008209.1"/>
</dbReference>
<dbReference type="SMR" id="Q168V8"/>
<dbReference type="STRING" id="375451.RD1_1874"/>
<dbReference type="KEGG" id="rde:RD1_1874"/>
<dbReference type="eggNOG" id="COG0207">
    <property type="taxonomic scope" value="Bacteria"/>
</dbReference>
<dbReference type="HOGENOM" id="CLU_021669_0_0_5"/>
<dbReference type="OrthoDB" id="9774633at2"/>
<dbReference type="UniPathway" id="UPA00575"/>
<dbReference type="Proteomes" id="UP000007029">
    <property type="component" value="Chromosome"/>
</dbReference>
<dbReference type="GO" id="GO:0005829">
    <property type="term" value="C:cytosol"/>
    <property type="evidence" value="ECO:0007669"/>
    <property type="project" value="TreeGrafter"/>
</dbReference>
<dbReference type="GO" id="GO:0004799">
    <property type="term" value="F:thymidylate synthase activity"/>
    <property type="evidence" value="ECO:0007669"/>
    <property type="project" value="UniProtKB-UniRule"/>
</dbReference>
<dbReference type="GO" id="GO:0006231">
    <property type="term" value="P:dTMP biosynthetic process"/>
    <property type="evidence" value="ECO:0007669"/>
    <property type="project" value="UniProtKB-UniRule"/>
</dbReference>
<dbReference type="GO" id="GO:0006235">
    <property type="term" value="P:dTTP biosynthetic process"/>
    <property type="evidence" value="ECO:0007669"/>
    <property type="project" value="UniProtKB-UniRule"/>
</dbReference>
<dbReference type="GO" id="GO:0032259">
    <property type="term" value="P:methylation"/>
    <property type="evidence" value="ECO:0007669"/>
    <property type="project" value="UniProtKB-KW"/>
</dbReference>
<dbReference type="CDD" id="cd00351">
    <property type="entry name" value="TS_Pyrimidine_HMase"/>
    <property type="match status" value="1"/>
</dbReference>
<dbReference type="FunFam" id="3.30.572.10:FF:000013">
    <property type="entry name" value="Thymidylate synthase"/>
    <property type="match status" value="1"/>
</dbReference>
<dbReference type="Gene3D" id="3.30.572.10">
    <property type="entry name" value="Thymidylate synthase/dCMP hydroxymethylase domain"/>
    <property type="match status" value="1"/>
</dbReference>
<dbReference type="HAMAP" id="MF_00008">
    <property type="entry name" value="Thymidy_synth_bact"/>
    <property type="match status" value="1"/>
</dbReference>
<dbReference type="InterPro" id="IPR045097">
    <property type="entry name" value="Thymidate_synth/dCMP_Mease"/>
</dbReference>
<dbReference type="InterPro" id="IPR023451">
    <property type="entry name" value="Thymidate_synth/dCMP_Mease_dom"/>
</dbReference>
<dbReference type="InterPro" id="IPR036926">
    <property type="entry name" value="Thymidate_synth/dCMP_Mease_sf"/>
</dbReference>
<dbReference type="InterPro" id="IPR000398">
    <property type="entry name" value="Thymidylate_synthase"/>
</dbReference>
<dbReference type="NCBIfam" id="NF002497">
    <property type="entry name" value="PRK01827.1-3"/>
    <property type="match status" value="1"/>
</dbReference>
<dbReference type="NCBIfam" id="TIGR03284">
    <property type="entry name" value="thym_sym"/>
    <property type="match status" value="2"/>
</dbReference>
<dbReference type="PANTHER" id="PTHR11548:SF9">
    <property type="entry name" value="THYMIDYLATE SYNTHASE"/>
    <property type="match status" value="1"/>
</dbReference>
<dbReference type="PANTHER" id="PTHR11548">
    <property type="entry name" value="THYMIDYLATE SYNTHASE 1"/>
    <property type="match status" value="1"/>
</dbReference>
<dbReference type="Pfam" id="PF00303">
    <property type="entry name" value="Thymidylat_synt"/>
    <property type="match status" value="1"/>
</dbReference>
<dbReference type="PRINTS" id="PR00108">
    <property type="entry name" value="THYMDSNTHASE"/>
</dbReference>
<dbReference type="SUPFAM" id="SSF55831">
    <property type="entry name" value="Thymidylate synthase/dCMP hydroxymethylase"/>
    <property type="match status" value="1"/>
</dbReference>
<protein>
    <recommendedName>
        <fullName evidence="1">Thymidylate synthase</fullName>
        <shortName evidence="1">TS</shortName>
        <shortName evidence="1">TSase</shortName>
        <ecNumber evidence="1">2.1.1.45</ecNumber>
    </recommendedName>
</protein>
<proteinExistence type="inferred from homology"/>
<comment type="function">
    <text evidence="1">Catalyzes the reductive methylation of 2'-deoxyuridine-5'-monophosphate (dUMP) to 2'-deoxythymidine-5'-monophosphate (dTMP) while utilizing 5,10-methylenetetrahydrofolate (mTHF) as the methyl donor and reductant in the reaction, yielding dihydrofolate (DHF) as a by-product. This enzymatic reaction provides an intracellular de novo source of dTMP, an essential precursor for DNA biosynthesis.</text>
</comment>
<comment type="catalytic activity">
    <reaction evidence="1">
        <text>dUMP + (6R)-5,10-methylene-5,6,7,8-tetrahydrofolate = 7,8-dihydrofolate + dTMP</text>
        <dbReference type="Rhea" id="RHEA:12104"/>
        <dbReference type="ChEBI" id="CHEBI:15636"/>
        <dbReference type="ChEBI" id="CHEBI:57451"/>
        <dbReference type="ChEBI" id="CHEBI:63528"/>
        <dbReference type="ChEBI" id="CHEBI:246422"/>
        <dbReference type="EC" id="2.1.1.45"/>
    </reaction>
</comment>
<comment type="pathway">
    <text evidence="1">Pyrimidine metabolism; dTTP biosynthesis.</text>
</comment>
<comment type="subunit">
    <text evidence="1">Homodimer.</text>
</comment>
<comment type="subcellular location">
    <subcellularLocation>
        <location evidence="1">Cytoplasm</location>
    </subcellularLocation>
</comment>
<comment type="similarity">
    <text evidence="1">Belongs to the thymidylate synthase family. Bacterial-type ThyA subfamily.</text>
</comment>
<feature type="chain" id="PRO_1000000663" description="Thymidylate synthase">
    <location>
        <begin position="1"/>
        <end position="277"/>
    </location>
</feature>
<feature type="active site" description="Nucleophile" evidence="1">
    <location>
        <position position="159"/>
    </location>
</feature>
<feature type="binding site" description="in other chain" evidence="1">
    <location>
        <position position="21"/>
    </location>
    <ligand>
        <name>dUMP</name>
        <dbReference type="ChEBI" id="CHEBI:246422"/>
        <note>ligand shared between dimeric partners</note>
    </ligand>
</feature>
<feature type="binding site" evidence="1">
    <location>
        <position position="51"/>
    </location>
    <ligand>
        <name>(6R)-5,10-methylene-5,6,7,8-tetrahydrofolate</name>
        <dbReference type="ChEBI" id="CHEBI:15636"/>
    </ligand>
</feature>
<feature type="binding site" evidence="1">
    <location>
        <begin position="139"/>
        <end position="140"/>
    </location>
    <ligand>
        <name>dUMP</name>
        <dbReference type="ChEBI" id="CHEBI:246422"/>
        <note>ligand shared between dimeric partners</note>
    </ligand>
</feature>
<feature type="binding site" description="in other chain" evidence="1">
    <location>
        <begin position="179"/>
        <end position="182"/>
    </location>
    <ligand>
        <name>dUMP</name>
        <dbReference type="ChEBI" id="CHEBI:246422"/>
        <note>ligand shared between dimeric partners</note>
    </ligand>
</feature>
<feature type="binding site" evidence="1">
    <location>
        <position position="182"/>
    </location>
    <ligand>
        <name>(6R)-5,10-methylene-5,6,7,8-tetrahydrofolate</name>
        <dbReference type="ChEBI" id="CHEBI:15636"/>
    </ligand>
</feature>
<feature type="binding site" description="in other chain" evidence="1">
    <location>
        <position position="190"/>
    </location>
    <ligand>
        <name>dUMP</name>
        <dbReference type="ChEBI" id="CHEBI:246422"/>
        <note>ligand shared between dimeric partners</note>
    </ligand>
</feature>
<feature type="binding site" description="in other chain" evidence="1">
    <location>
        <begin position="220"/>
        <end position="222"/>
    </location>
    <ligand>
        <name>dUMP</name>
        <dbReference type="ChEBI" id="CHEBI:246422"/>
        <note>ligand shared between dimeric partners</note>
    </ligand>
</feature>
<feature type="binding site" evidence="1">
    <location>
        <position position="276"/>
    </location>
    <ligand>
        <name>(6R)-5,10-methylene-5,6,7,8-tetrahydrofolate</name>
        <dbReference type="ChEBI" id="CHEBI:15636"/>
    </ligand>
</feature>
<keyword id="KW-0963">Cytoplasm</keyword>
<keyword id="KW-0489">Methyltransferase</keyword>
<keyword id="KW-0545">Nucleotide biosynthesis</keyword>
<keyword id="KW-1185">Reference proteome</keyword>
<keyword id="KW-0808">Transferase</keyword>
<evidence type="ECO:0000255" key="1">
    <source>
        <dbReference type="HAMAP-Rule" id="MF_00008"/>
    </source>
</evidence>
<accession>Q168V8</accession>
<reference key="1">
    <citation type="journal article" date="2007" name="J. Bacteriol.">
        <title>The complete genome sequence of Roseobacter denitrificans reveals a mixotrophic rather than photosynthetic metabolism.</title>
        <authorList>
            <person name="Swingley W.D."/>
            <person name="Sadekar S."/>
            <person name="Mastrian S.D."/>
            <person name="Matthies H.J."/>
            <person name="Hao J."/>
            <person name="Ramos H."/>
            <person name="Acharya C.R."/>
            <person name="Conrad A.L."/>
            <person name="Taylor H.L."/>
            <person name="Dejesa L.C."/>
            <person name="Shah M.K."/>
            <person name="O'Huallachain M.E."/>
            <person name="Lince M.T."/>
            <person name="Blankenship R.E."/>
            <person name="Beatty J.T."/>
            <person name="Touchman J.W."/>
        </authorList>
    </citation>
    <scope>NUCLEOTIDE SEQUENCE [LARGE SCALE GENOMIC DNA]</scope>
    <source>
        <strain>ATCC 33942 / OCh 114</strain>
    </source>
</reference>
<gene>
    <name evidence="1" type="primary">thyA</name>
    <name type="ordered locus">RD1_1874</name>
</gene>
<sequence>MQQYHDALRTILECGEESTDRTGTGTISYFGMQMRYPLSDGFPLVTTKKLHLRSIFHELLWFLSGDTNIRYLQDNGVSIWDEWADENGDLGPVYGHQWRAFSALSPTEEVKDGEPLYLGRGVDQVTNLIDMIKSSPDSRRMIVSAWNPADVPRMALPPCHALWQVRVLNGRMHLQLYQRSADMFLGVPFNIASYSLLLVMLAHVTGYEPGDFVHTLGDAHIYSNHMDQVNLQLTRTPKPLPTLRINRQVSSIFDFRYEDFEVIGYDPDPAIRAPVAV</sequence>
<organism>
    <name type="scientific">Roseobacter denitrificans (strain ATCC 33942 / OCh 114)</name>
    <name type="common">Erythrobacter sp. (strain OCh 114)</name>
    <name type="synonym">Roseobacter denitrificans</name>
    <dbReference type="NCBI Taxonomy" id="375451"/>
    <lineage>
        <taxon>Bacteria</taxon>
        <taxon>Pseudomonadati</taxon>
        <taxon>Pseudomonadota</taxon>
        <taxon>Alphaproteobacteria</taxon>
        <taxon>Rhodobacterales</taxon>
        <taxon>Roseobacteraceae</taxon>
        <taxon>Roseobacter</taxon>
    </lineage>
</organism>